<gene>
    <name type="primary">gpa-10</name>
    <name type="ORF">CBG19035</name>
</gene>
<keyword id="KW-0342">GTP-binding</keyword>
<keyword id="KW-0449">Lipoprotein</keyword>
<keyword id="KW-0460">Magnesium</keyword>
<keyword id="KW-0479">Metal-binding</keyword>
<keyword id="KW-0519">Myristate</keyword>
<keyword id="KW-0547">Nucleotide-binding</keyword>
<keyword id="KW-0564">Palmitate</keyword>
<keyword id="KW-1185">Reference proteome</keyword>
<keyword id="KW-0807">Transducer</keyword>
<protein>
    <recommendedName>
        <fullName>Guanine nucleotide-binding protein alpha-10 subunit</fullName>
    </recommendedName>
</protein>
<sequence>MGACGSVMQDEALKEQARIHRQIEKSLEKKKSALLEQSVLLIGPGESGKSTVLKQIRSVTVCRAMCGGYTKHELEEKKLLILRNLWTFSDMLLEYVIKNYLDMNETDKKKYKVMIEELKFCVMSGGHMGDELAETVKVFWLCAPIQEAYEKRNTYHLTESAGYFFENIDRIKMPDFQPTNQDIVRIRVPTTGVVTADVILKNIKLSVIDCGGQRQERRKWYHYFDDVHAVLFVAAISEYDQKLVEDESVNRMDEALNLYHIVFNGKYFTKAACILFLNKIDLFREKVKSVSIKKFHPGFEGANTAEDGAKYFRRKFRDGMHPDFKKRLYCHETCAISDQVQIIINTVIDTVVQENLKDTGMI</sequence>
<comment type="function">
    <text>Guanine nucleotide-binding proteins (G proteins) are involved as modulators or transducers in various transmembrane signaling systems.</text>
</comment>
<comment type="subunit">
    <text>G proteins are composed of 3 units; alpha, beta and gamma. The alpha chain contains the guanine nucleotide binding site.</text>
</comment>
<comment type="similarity">
    <text evidence="4">Belongs to the G-alpha family.</text>
</comment>
<comment type="sequence caution" evidence="4">
    <conflict type="erroneous gene model prediction">
        <sequence resource="EMBL-CDS" id="AAW02894"/>
    </conflict>
</comment>
<reference key="1">
    <citation type="journal article" date="2005" name="Mol. Genet. Genomics">
        <title>Functional constraint and divergence in the G protein family in Caenorhabditis elegans and Caenorhabditis briggsae.</title>
        <authorList>
            <person name="Jovelin R."/>
            <person name="Phillips P.C."/>
        </authorList>
    </citation>
    <scope>NUCLEOTIDE SEQUENCE [GENOMIC DNA]</scope>
    <source>
        <strain>AF16</strain>
    </source>
</reference>
<reference key="2">
    <citation type="journal article" date="2003" name="PLoS Biol.">
        <title>The genome sequence of Caenorhabditis briggsae: a platform for comparative genomics.</title>
        <authorList>
            <person name="Stein L.D."/>
            <person name="Bao Z."/>
            <person name="Blasiar D."/>
            <person name="Blumenthal T."/>
            <person name="Brent M.R."/>
            <person name="Chen N."/>
            <person name="Chinwalla A."/>
            <person name="Clarke L."/>
            <person name="Clee C."/>
            <person name="Coghlan A."/>
            <person name="Coulson A."/>
            <person name="D'Eustachio P."/>
            <person name="Fitch D.H.A."/>
            <person name="Fulton L.A."/>
            <person name="Fulton R.E."/>
            <person name="Griffiths-Jones S."/>
            <person name="Harris T.W."/>
            <person name="Hillier L.W."/>
            <person name="Kamath R."/>
            <person name="Kuwabara P.E."/>
            <person name="Mardis E.R."/>
            <person name="Marra M.A."/>
            <person name="Miner T.L."/>
            <person name="Minx P."/>
            <person name="Mullikin J.C."/>
            <person name="Plumb R.W."/>
            <person name="Rogers J."/>
            <person name="Schein J.E."/>
            <person name="Sohrmann M."/>
            <person name="Spieth J."/>
            <person name="Stajich J.E."/>
            <person name="Wei C."/>
            <person name="Willey D."/>
            <person name="Wilson R.K."/>
            <person name="Durbin R.M."/>
            <person name="Waterston R.H."/>
        </authorList>
    </citation>
    <scope>NUCLEOTIDE SEQUENCE [LARGE SCALE GENOMIC DNA]</scope>
    <source>
        <strain>AF16</strain>
    </source>
</reference>
<proteinExistence type="inferred from homology"/>
<accession>Q4VT42</accession>
<accession>A8XUM2</accession>
<accession>Q60WQ1</accession>
<name>GPA10_CAEBR</name>
<dbReference type="EMBL" id="AY634288">
    <property type="protein sequence ID" value="AAW02894.1"/>
    <property type="status" value="ALT_SEQ"/>
    <property type="molecule type" value="Genomic_DNA"/>
</dbReference>
<dbReference type="EMBL" id="HE601047">
    <property type="protein sequence ID" value="CAP36347.3"/>
    <property type="molecule type" value="Genomic_DNA"/>
</dbReference>
<dbReference type="SMR" id="Q4VT42"/>
<dbReference type="FunCoup" id="Q4VT42">
    <property type="interactions" value="6"/>
</dbReference>
<dbReference type="STRING" id="6238.Q4VT42"/>
<dbReference type="KEGG" id="cbr:CBG_19035"/>
<dbReference type="CTD" id="8579334"/>
<dbReference type="WormBase" id="CBG19035">
    <property type="protein sequence ID" value="CBP39264"/>
    <property type="gene ID" value="WBGene00038318"/>
    <property type="gene designation" value="Cbr-gpa-10"/>
</dbReference>
<dbReference type="eggNOG" id="KOG0082">
    <property type="taxonomic scope" value="Eukaryota"/>
</dbReference>
<dbReference type="HOGENOM" id="CLU_014184_6_0_1"/>
<dbReference type="InParanoid" id="Q4VT42"/>
<dbReference type="OMA" id="YMNIVQA"/>
<dbReference type="Proteomes" id="UP000008549">
    <property type="component" value="Unassembled WGS sequence"/>
</dbReference>
<dbReference type="GO" id="GO:0005737">
    <property type="term" value="C:cytoplasm"/>
    <property type="evidence" value="ECO:0000318"/>
    <property type="project" value="GO_Central"/>
</dbReference>
<dbReference type="GO" id="GO:0005834">
    <property type="term" value="C:heterotrimeric G-protein complex"/>
    <property type="evidence" value="ECO:0000318"/>
    <property type="project" value="GO_Central"/>
</dbReference>
<dbReference type="GO" id="GO:0001664">
    <property type="term" value="F:G protein-coupled receptor binding"/>
    <property type="evidence" value="ECO:0000318"/>
    <property type="project" value="GO_Central"/>
</dbReference>
<dbReference type="GO" id="GO:0031683">
    <property type="term" value="F:G-protein beta/gamma-subunit complex binding"/>
    <property type="evidence" value="ECO:0000318"/>
    <property type="project" value="GO_Central"/>
</dbReference>
<dbReference type="GO" id="GO:0005525">
    <property type="term" value="F:GTP binding"/>
    <property type="evidence" value="ECO:0007669"/>
    <property type="project" value="UniProtKB-KW"/>
</dbReference>
<dbReference type="GO" id="GO:0003924">
    <property type="term" value="F:GTPase activity"/>
    <property type="evidence" value="ECO:0000318"/>
    <property type="project" value="GO_Central"/>
</dbReference>
<dbReference type="GO" id="GO:0046872">
    <property type="term" value="F:metal ion binding"/>
    <property type="evidence" value="ECO:0007669"/>
    <property type="project" value="UniProtKB-KW"/>
</dbReference>
<dbReference type="GO" id="GO:0007188">
    <property type="term" value="P:adenylate cyclase-modulating G protein-coupled receptor signaling pathway"/>
    <property type="evidence" value="ECO:0000318"/>
    <property type="project" value="GO_Central"/>
</dbReference>
<dbReference type="CDD" id="cd00066">
    <property type="entry name" value="G-alpha"/>
    <property type="match status" value="1"/>
</dbReference>
<dbReference type="FunFam" id="1.10.400.10:FF:000031">
    <property type="entry name" value="Guanine nucleotide-binding protein alpha-10 subunit"/>
    <property type="match status" value="1"/>
</dbReference>
<dbReference type="FunFam" id="3.40.50.300:FF:000692">
    <property type="entry name" value="Guanine nucleotide-binding protein subunit alpha"/>
    <property type="match status" value="1"/>
</dbReference>
<dbReference type="Gene3D" id="1.10.400.10">
    <property type="entry name" value="GI Alpha 1, domain 2-like"/>
    <property type="match status" value="1"/>
</dbReference>
<dbReference type="Gene3D" id="3.40.50.300">
    <property type="entry name" value="P-loop containing nucleotide triphosphate hydrolases"/>
    <property type="match status" value="1"/>
</dbReference>
<dbReference type="InterPro" id="IPR001019">
    <property type="entry name" value="Gprotein_alpha_su"/>
</dbReference>
<dbReference type="InterPro" id="IPR011025">
    <property type="entry name" value="GproteinA_insert"/>
</dbReference>
<dbReference type="InterPro" id="IPR027417">
    <property type="entry name" value="P-loop_NTPase"/>
</dbReference>
<dbReference type="PANTHER" id="PTHR10218">
    <property type="entry name" value="GTP-BINDING PROTEIN ALPHA SUBUNIT"/>
    <property type="match status" value="1"/>
</dbReference>
<dbReference type="PANTHER" id="PTHR10218:SF225">
    <property type="entry name" value="GUANINE NUCLEOTIDE-BINDING PROTEIN ALPHA-10 SUBUNIT"/>
    <property type="match status" value="1"/>
</dbReference>
<dbReference type="Pfam" id="PF00503">
    <property type="entry name" value="G-alpha"/>
    <property type="match status" value="1"/>
</dbReference>
<dbReference type="PRINTS" id="PR00318">
    <property type="entry name" value="GPROTEINA"/>
</dbReference>
<dbReference type="SMART" id="SM00275">
    <property type="entry name" value="G_alpha"/>
    <property type="match status" value="1"/>
</dbReference>
<dbReference type="SUPFAM" id="SSF52540">
    <property type="entry name" value="P-loop containing nucleoside triphosphate hydrolases"/>
    <property type="match status" value="1"/>
</dbReference>
<dbReference type="SUPFAM" id="SSF47895">
    <property type="entry name" value="Transducin (alpha subunit), insertion domain"/>
    <property type="match status" value="1"/>
</dbReference>
<dbReference type="PROSITE" id="PS51882">
    <property type="entry name" value="G_ALPHA"/>
    <property type="match status" value="1"/>
</dbReference>
<organism>
    <name type="scientific">Caenorhabditis briggsae</name>
    <dbReference type="NCBI Taxonomy" id="6238"/>
    <lineage>
        <taxon>Eukaryota</taxon>
        <taxon>Metazoa</taxon>
        <taxon>Ecdysozoa</taxon>
        <taxon>Nematoda</taxon>
        <taxon>Chromadorea</taxon>
        <taxon>Rhabditida</taxon>
        <taxon>Rhabditina</taxon>
        <taxon>Rhabditomorpha</taxon>
        <taxon>Rhabditoidea</taxon>
        <taxon>Rhabditidae</taxon>
        <taxon>Peloderinae</taxon>
        <taxon>Caenorhabditis</taxon>
    </lineage>
</organism>
<feature type="initiator methionine" description="Removed" evidence="2">
    <location>
        <position position="1"/>
    </location>
</feature>
<feature type="chain" id="PRO_0000203645" description="Guanine nucleotide-binding protein alpha-10 subunit">
    <location>
        <begin position="2"/>
        <end position="362"/>
    </location>
</feature>
<feature type="domain" description="G-alpha" evidence="3">
    <location>
        <begin position="35"/>
        <end position="362"/>
    </location>
</feature>
<feature type="region of interest" description="G1 motif" evidence="3">
    <location>
        <begin position="38"/>
        <end position="51"/>
    </location>
</feature>
<feature type="region of interest" description="G2 motif" evidence="3">
    <location>
        <begin position="182"/>
        <end position="190"/>
    </location>
</feature>
<feature type="region of interest" description="G3 motif" evidence="3">
    <location>
        <begin position="205"/>
        <end position="214"/>
    </location>
</feature>
<feature type="region of interest" description="G4 motif" evidence="3">
    <location>
        <begin position="274"/>
        <end position="281"/>
    </location>
</feature>
<feature type="region of interest" description="G5 motif" evidence="3">
    <location>
        <begin position="333"/>
        <end position="337"/>
    </location>
</feature>
<feature type="binding site" evidence="1">
    <location>
        <begin position="43"/>
        <end position="50"/>
    </location>
    <ligand>
        <name>GTP</name>
        <dbReference type="ChEBI" id="CHEBI:37565"/>
    </ligand>
</feature>
<feature type="binding site" evidence="1">
    <location>
        <position position="50"/>
    </location>
    <ligand>
        <name>Mg(2+)</name>
        <dbReference type="ChEBI" id="CHEBI:18420"/>
    </ligand>
</feature>
<feature type="binding site" evidence="1">
    <location>
        <begin position="184"/>
        <end position="190"/>
    </location>
    <ligand>
        <name>GTP</name>
        <dbReference type="ChEBI" id="CHEBI:37565"/>
    </ligand>
</feature>
<feature type="binding site" evidence="1">
    <location>
        <position position="190"/>
    </location>
    <ligand>
        <name>Mg(2+)</name>
        <dbReference type="ChEBI" id="CHEBI:18420"/>
    </ligand>
</feature>
<feature type="binding site" evidence="1">
    <location>
        <begin position="209"/>
        <end position="213"/>
    </location>
    <ligand>
        <name>GTP</name>
        <dbReference type="ChEBI" id="CHEBI:37565"/>
    </ligand>
</feature>
<feature type="binding site" evidence="1">
    <location>
        <begin position="278"/>
        <end position="281"/>
    </location>
    <ligand>
        <name>GTP</name>
        <dbReference type="ChEBI" id="CHEBI:37565"/>
    </ligand>
</feature>
<feature type="binding site" evidence="1">
    <location>
        <position position="335"/>
    </location>
    <ligand>
        <name>GTP</name>
        <dbReference type="ChEBI" id="CHEBI:37565"/>
    </ligand>
</feature>
<feature type="lipid moiety-binding region" description="N-myristoyl glycine" evidence="2">
    <location>
        <position position="2"/>
    </location>
</feature>
<feature type="lipid moiety-binding region" description="S-palmitoyl cysteine" evidence="2">
    <location>
        <position position="4"/>
    </location>
</feature>
<feature type="sequence conflict" description="In Ref. 1; AAW02894." evidence="4" ref="1">
    <location>
        <begin position="57"/>
        <end position="62"/>
    </location>
</feature>
<evidence type="ECO:0000250" key="1"/>
<evidence type="ECO:0000255" key="2"/>
<evidence type="ECO:0000255" key="3">
    <source>
        <dbReference type="PROSITE-ProRule" id="PRU01230"/>
    </source>
</evidence>
<evidence type="ECO:0000305" key="4"/>